<gene>
    <name evidence="1" type="primary">adc</name>
    <name type="ordered locus">Bphyt_1567</name>
</gene>
<keyword id="KW-0210">Decarboxylase</keyword>
<keyword id="KW-0456">Lyase</keyword>
<keyword id="KW-0704">Schiff base</keyword>
<protein>
    <recommendedName>
        <fullName evidence="1">Acetoacetate decarboxylase</fullName>
        <shortName evidence="1">AAD</shortName>
        <shortName evidence="1">ADC</shortName>
        <ecNumber evidence="1">4.1.1.4</ecNumber>
    </recommendedName>
</protein>
<comment type="function">
    <text evidence="1">Catalyzes the conversion of acetoacetate to acetone and carbon dioxide.</text>
</comment>
<comment type="catalytic activity">
    <reaction evidence="1">
        <text>acetoacetate + H(+) = acetone + CO2</text>
        <dbReference type="Rhea" id="RHEA:19729"/>
        <dbReference type="ChEBI" id="CHEBI:13705"/>
        <dbReference type="ChEBI" id="CHEBI:15347"/>
        <dbReference type="ChEBI" id="CHEBI:15378"/>
        <dbReference type="ChEBI" id="CHEBI:16526"/>
        <dbReference type="EC" id="4.1.1.4"/>
    </reaction>
</comment>
<comment type="similarity">
    <text evidence="1">Belongs to the ADC family.</text>
</comment>
<name>ADC_PARPJ</name>
<organism>
    <name type="scientific">Paraburkholderia phytofirmans (strain DSM 17436 / LMG 22146 / PsJN)</name>
    <name type="common">Burkholderia phytofirmans</name>
    <dbReference type="NCBI Taxonomy" id="398527"/>
    <lineage>
        <taxon>Bacteria</taxon>
        <taxon>Pseudomonadati</taxon>
        <taxon>Pseudomonadota</taxon>
        <taxon>Betaproteobacteria</taxon>
        <taxon>Burkholderiales</taxon>
        <taxon>Burkholderiaceae</taxon>
        <taxon>Paraburkholderia</taxon>
    </lineage>
</organism>
<evidence type="ECO:0000255" key="1">
    <source>
        <dbReference type="HAMAP-Rule" id="MF_00597"/>
    </source>
</evidence>
<dbReference type="EC" id="4.1.1.4" evidence="1"/>
<dbReference type="EMBL" id="CP001052">
    <property type="protein sequence ID" value="ACD15980.1"/>
    <property type="molecule type" value="Genomic_DNA"/>
</dbReference>
<dbReference type="RefSeq" id="WP_012432594.1">
    <property type="nucleotide sequence ID" value="NC_010681.1"/>
</dbReference>
<dbReference type="SMR" id="B2T319"/>
<dbReference type="STRING" id="398527.Bphyt_1567"/>
<dbReference type="KEGG" id="bpy:Bphyt_1567"/>
<dbReference type="eggNOG" id="COG4689">
    <property type="taxonomic scope" value="Bacteria"/>
</dbReference>
<dbReference type="HOGENOM" id="CLU_077089_0_0_4"/>
<dbReference type="OrthoDB" id="1633687at2"/>
<dbReference type="Proteomes" id="UP000001739">
    <property type="component" value="Chromosome 1"/>
</dbReference>
<dbReference type="GO" id="GO:0047602">
    <property type="term" value="F:acetoacetate decarboxylase activity"/>
    <property type="evidence" value="ECO:0007669"/>
    <property type="project" value="UniProtKB-UniRule"/>
</dbReference>
<dbReference type="Gene3D" id="2.40.400.10">
    <property type="entry name" value="Acetoacetate decarboxylase-like"/>
    <property type="match status" value="1"/>
</dbReference>
<dbReference type="HAMAP" id="MF_00597">
    <property type="entry name" value="ADC"/>
    <property type="match status" value="1"/>
</dbReference>
<dbReference type="InterPro" id="IPR010451">
    <property type="entry name" value="Acetoacetate_decarboxylase"/>
</dbReference>
<dbReference type="InterPro" id="IPR023653">
    <property type="entry name" value="Acetoacetate_decarboxylase_bac"/>
</dbReference>
<dbReference type="InterPro" id="IPR023375">
    <property type="entry name" value="ADC_dom_sf"/>
</dbReference>
<dbReference type="NCBIfam" id="NF002614">
    <property type="entry name" value="PRK02265.1"/>
    <property type="match status" value="1"/>
</dbReference>
<dbReference type="Pfam" id="PF06314">
    <property type="entry name" value="ADC"/>
    <property type="match status" value="1"/>
</dbReference>
<dbReference type="SUPFAM" id="SSF160104">
    <property type="entry name" value="Acetoacetate decarboxylase-like"/>
    <property type="match status" value="1"/>
</dbReference>
<sequence>MDVKSVLSNAFAMPITSPAFPMGPYRFINREFLIITYRTDPDKLRAVVPEPLEIGEPLVHYEFIRMPDSTGFGDYTESGQVIPVSYKGVAGGYTLAMYLDDHPPIAGGRELWGFPKKLANPVLAVHTDTLVGTLDYGPVRIATGTMGYKHRQLDLAQQKKRLETPNFLLKVIPHVDGTPRICELVRYYLQDIDLKGAWTGPAALELAHHALAPVAELPVLEIVEARHLLADLTLGLGEVVFDYLDQPEANAR</sequence>
<feature type="chain" id="PRO_1000129878" description="Acetoacetate decarboxylase">
    <location>
        <begin position="1"/>
        <end position="252"/>
    </location>
</feature>
<feature type="active site" description="Schiff-base intermediate with acetoacetate" evidence="1">
    <location>
        <position position="116"/>
    </location>
</feature>
<accession>B2T319</accession>
<proteinExistence type="inferred from homology"/>
<reference key="1">
    <citation type="journal article" date="2011" name="J. Bacteriol.">
        <title>Complete genome sequence of the plant growth-promoting endophyte Burkholderia phytofirmans strain PsJN.</title>
        <authorList>
            <person name="Weilharter A."/>
            <person name="Mitter B."/>
            <person name="Shin M.V."/>
            <person name="Chain P.S."/>
            <person name="Nowak J."/>
            <person name="Sessitsch A."/>
        </authorList>
    </citation>
    <scope>NUCLEOTIDE SEQUENCE [LARGE SCALE GENOMIC DNA]</scope>
    <source>
        <strain>DSM 17436 / LMG 22146 / PsJN</strain>
    </source>
</reference>